<keyword id="KW-0130">Cell adhesion</keyword>
<keyword id="KW-0165">Cleavage on pair of basic residues</keyword>
<keyword id="KW-0968">Cytoplasmic vesicle</keyword>
<keyword id="KW-0278">Fertilization</keyword>
<keyword id="KW-0732">Signal</keyword>
<reference key="1">
    <citation type="journal article" date="1991" name="Mol. Biol. Evol.">
        <title>Comparison of the bindin proteins of Strongylocentrotus franciscanus, S. purpuratus, and Lytechinus variegatus: sequences involved in the species specificity of fertilization.</title>
        <authorList>
            <person name="Minor J.E."/>
            <person name="Fromson D.R."/>
            <person name="Britten R.J."/>
            <person name="Davidson E.H."/>
        </authorList>
    </citation>
    <scope>NUCLEOTIDE SEQUENCE [MRNA]</scope>
</reference>
<name>BIND_LYTVA</name>
<evidence type="ECO:0000255" key="1"/>
<evidence type="ECO:0000256" key="2">
    <source>
        <dbReference type="SAM" id="MobiDB-lite"/>
    </source>
</evidence>
<evidence type="ECO:0000305" key="3"/>
<feature type="signal peptide" evidence="1">
    <location>
        <begin position="1"/>
        <end position="19"/>
    </location>
</feature>
<feature type="propeptide" id="PRO_0000020811" evidence="1">
    <location>
        <begin position="20"/>
        <end position="244"/>
    </location>
</feature>
<feature type="chain" id="PRO_0000020812" description="Bindin">
    <location>
        <begin position="245"/>
        <end position="462"/>
    </location>
</feature>
<feature type="region of interest" description="Disordered" evidence="2">
    <location>
        <begin position="155"/>
        <end position="194"/>
    </location>
</feature>
<feature type="region of interest" description="Disordered" evidence="2">
    <location>
        <begin position="221"/>
        <end position="278"/>
    </location>
</feature>
<feature type="region of interest" description="Fucose-binding domain" evidence="1">
    <location>
        <begin position="372"/>
        <end position="380"/>
    </location>
</feature>
<dbReference type="EMBL" id="M59489">
    <property type="protein sequence ID" value="AAA29997.1"/>
    <property type="molecule type" value="mRNA"/>
</dbReference>
<dbReference type="PIR" id="A40552">
    <property type="entry name" value="A40552"/>
</dbReference>
<dbReference type="OrthoDB" id="10072653at2759"/>
<dbReference type="GO" id="GO:0043160">
    <property type="term" value="C:acrosomal lumen"/>
    <property type="evidence" value="ECO:0007669"/>
    <property type="project" value="UniProtKB-SubCell"/>
</dbReference>
<dbReference type="GO" id="GO:0007155">
    <property type="term" value="P:cell adhesion"/>
    <property type="evidence" value="ECO:0007669"/>
    <property type="project" value="UniProtKB-KW"/>
</dbReference>
<dbReference type="GO" id="GO:0007342">
    <property type="term" value="P:fusion of sperm to egg plasma membrane involved in single fertilization"/>
    <property type="evidence" value="ECO:0007669"/>
    <property type="project" value="InterPro"/>
</dbReference>
<dbReference type="InterPro" id="IPR000775">
    <property type="entry name" value="Bindin"/>
</dbReference>
<dbReference type="Pfam" id="PF02084">
    <property type="entry name" value="Bindin"/>
    <property type="match status" value="1"/>
</dbReference>
<dbReference type="PRINTS" id="PR00761">
    <property type="entry name" value="BINDIN"/>
</dbReference>
<sequence>MARQLSVILVALTLTTALAENFPTRTSAPSDCPQADQGCWCHKNFAQCWSTYDDSRLTEEIGSRITRLELLYQPNEEVVTYIRRMSALREIRISEDGMSLDCSCDLVDAMDDKGITLVNQDELEIRNCRQQGWSRDTMTARPFLIECRRFRIQDDDRRKRRDAEQDSDDVTKRASPRKGDKPAGHKLKDLAPKDTHHLVSIDDVEKHPATDFFNFISGHRRTRRSTGTNEEVSDDSGRSARKKRYGNMNYPQPMNQPMGGGNYPGQPPQQNYAPQGMGGPVGGGGMGGAVGAGAMGGPVGGGGGGMGGPVGGANGIGESVEDEMSVDSDYSSLGGETTISAKVIQDIKNLLGATKIDLPVDINDPYYLGLLLRHLRHHSNLLANIGDPEVREQVLSAMQEEEEEEENDAANGVRENVLNNLNAPGQGGYGGTQGGMRGGAGGGMMGNQGMGGQGYNQGYMQG</sequence>
<comment type="function">
    <text>Species-specific sea urchin sperm protein required for adhesion of sperm to the egg surface during fertilization. Bindin coats the acrosomal process after it is externalized by the acrosome reaction. It binds to sulfated, fucose-containing polysaccharides on the vitelline layer receptor proteoglycans which cover the egg plasma membrane.</text>
</comment>
<comment type="subcellular location">
    <subcellularLocation>
        <location>Cytoplasmic vesicle</location>
        <location>Secretory vesicle</location>
        <location>Acrosome lumen</location>
    </subcellularLocation>
</comment>
<comment type="similarity">
    <text evidence="3">Belongs to the bindin family.</text>
</comment>
<proteinExistence type="evidence at transcript level"/>
<accession>P23117</accession>
<protein>
    <recommendedName>
        <fullName>Bindin</fullName>
    </recommendedName>
</protein>
<organism>
    <name type="scientific">Lytechinus variegatus</name>
    <name type="common">Green sea urchin</name>
    <name type="synonym">Echinus variegatus</name>
    <dbReference type="NCBI Taxonomy" id="7654"/>
    <lineage>
        <taxon>Eukaryota</taxon>
        <taxon>Metazoa</taxon>
        <taxon>Echinodermata</taxon>
        <taxon>Eleutherozoa</taxon>
        <taxon>Echinozoa</taxon>
        <taxon>Echinoidea</taxon>
        <taxon>Euechinoidea</taxon>
        <taxon>Echinacea</taxon>
        <taxon>Temnopleuroida</taxon>
        <taxon>Toxopneustidae</taxon>
        <taxon>Lytechinus</taxon>
    </lineage>
</organism>